<feature type="chain" id="PRO_1000066794" description="UPF0212 protein Mevan_0819">
    <location>
        <begin position="1"/>
        <end position="113"/>
    </location>
</feature>
<gene>
    <name type="ordered locus">Mevan_0819</name>
</gene>
<evidence type="ECO:0000255" key="1">
    <source>
        <dbReference type="HAMAP-Rule" id="MF_01223"/>
    </source>
</evidence>
<protein>
    <recommendedName>
        <fullName evidence="1">UPF0212 protein Mevan_0819</fullName>
    </recommendedName>
</protein>
<reference key="1">
    <citation type="submission" date="2007-06" db="EMBL/GenBank/DDBJ databases">
        <title>Complete sequence of Methanococcus vannielii SB.</title>
        <authorList>
            <consortium name="US DOE Joint Genome Institute"/>
            <person name="Copeland A."/>
            <person name="Lucas S."/>
            <person name="Lapidus A."/>
            <person name="Barry K."/>
            <person name="Glavina del Rio T."/>
            <person name="Dalin E."/>
            <person name="Tice H."/>
            <person name="Pitluck S."/>
            <person name="Chain P."/>
            <person name="Malfatti S."/>
            <person name="Shin M."/>
            <person name="Vergez L."/>
            <person name="Schmutz J."/>
            <person name="Larimer F."/>
            <person name="Land M."/>
            <person name="Hauser L."/>
            <person name="Kyrpides N."/>
            <person name="Anderson I."/>
            <person name="Sieprawska-Lupa M."/>
            <person name="Whitman W.B."/>
            <person name="Richardson P."/>
        </authorList>
    </citation>
    <scope>NUCLEOTIDE SEQUENCE [LARGE SCALE GENOMIC DNA]</scope>
    <source>
        <strain>ATCC 35089 / DSM 1224 / JCM 13029 / OCM 148 / SB</strain>
    </source>
</reference>
<proteinExistence type="inferred from homology"/>
<organism>
    <name type="scientific">Methanococcus vannielii (strain ATCC 35089 / DSM 1224 / JCM 13029 / OCM 148 / SB)</name>
    <dbReference type="NCBI Taxonomy" id="406327"/>
    <lineage>
        <taxon>Archaea</taxon>
        <taxon>Methanobacteriati</taxon>
        <taxon>Methanobacteriota</taxon>
        <taxon>Methanomada group</taxon>
        <taxon>Methanococci</taxon>
        <taxon>Methanococcales</taxon>
        <taxon>Methanococcaceae</taxon>
        <taxon>Methanococcus</taxon>
    </lineage>
</organism>
<name>Y819_METVS</name>
<sequence length="113" mass="12049">MGNYHVTLQASYIAKNVEDVEDAIGVAISQIGKLLNKGSLDYVDIDVGLTICPKCGEPIDCVLVVAKTAIVGILLSMKVFNAESPEHAVRIAKSSIGRALKDIPLEDVDVVEI</sequence>
<comment type="similarity">
    <text evidence="1">Belongs to the UPF0212 family.</text>
</comment>
<accession>A6UQF3</accession>
<dbReference type="EMBL" id="CP000742">
    <property type="protein sequence ID" value="ABR54725.1"/>
    <property type="molecule type" value="Genomic_DNA"/>
</dbReference>
<dbReference type="RefSeq" id="WP_011171453.1">
    <property type="nucleotide sequence ID" value="NC_009634.1"/>
</dbReference>
<dbReference type="STRING" id="406327.Mevan_0819"/>
<dbReference type="GeneID" id="5324529"/>
<dbReference type="KEGG" id="mvn:Mevan_0819"/>
<dbReference type="eggNOG" id="arCOG02119">
    <property type="taxonomic scope" value="Archaea"/>
</dbReference>
<dbReference type="HOGENOM" id="CLU_138334_0_0_2"/>
<dbReference type="OrthoDB" id="63517at2157"/>
<dbReference type="Proteomes" id="UP000001107">
    <property type="component" value="Chromosome"/>
</dbReference>
<dbReference type="HAMAP" id="MF_01223">
    <property type="entry name" value="UPF0212"/>
    <property type="match status" value="1"/>
</dbReference>
<dbReference type="InterPro" id="IPR007564">
    <property type="entry name" value="UPF0212"/>
</dbReference>
<dbReference type="NCBIfam" id="NF003035">
    <property type="entry name" value="PRK03922.1"/>
    <property type="match status" value="1"/>
</dbReference>
<dbReference type="PANTHER" id="PTHR42199">
    <property type="entry name" value="UPF0212 PROTEIN MJ0068"/>
    <property type="match status" value="1"/>
</dbReference>
<dbReference type="PANTHER" id="PTHR42199:SF1">
    <property type="entry name" value="UPF0212 PROTEIN TK1194"/>
    <property type="match status" value="1"/>
</dbReference>
<dbReference type="Pfam" id="PF04475">
    <property type="entry name" value="DUF555"/>
    <property type="match status" value="1"/>
</dbReference>
<dbReference type="PIRSF" id="PIRSF016934">
    <property type="entry name" value="UCP016934"/>
    <property type="match status" value="1"/>
</dbReference>